<keyword id="KW-0067">ATP-binding</keyword>
<keyword id="KW-1003">Cell membrane</keyword>
<keyword id="KW-0378">Hydrolase</keyword>
<keyword id="KW-0472">Membrane</keyword>
<keyword id="KW-0547">Nucleotide-binding</keyword>
<keyword id="KW-0677">Repeat</keyword>
<keyword id="KW-0812">Transmembrane</keyword>
<keyword id="KW-1133">Transmembrane helix</keyword>
<keyword id="KW-0813">Transport</keyword>
<comment type="function">
    <text evidence="5 6 11">ABC transporter; part of the gene cluster that mediates the biosynthesis of KK-1, a novel cyclic depsipeptide with 10 residues which is a promising active compound with high activity against many plant pathogens, especially Botrytis cinerea (PubMed:29686660, PubMed:37746209). Is probably directly involved in the secretion of KK-1 and thus confers self-tolerance against KK-1 (Probable).</text>
</comment>
<comment type="pathway">
    <text evidence="5 6">Secondary metabolite biosynthesis.</text>
</comment>
<comment type="subcellular location">
    <subcellularLocation>
        <location evidence="10">Cell membrane</location>
        <topology evidence="1">Multi-pass membrane protein</topology>
    </subcellularLocation>
</comment>
<comment type="induction">
    <text evidence="6">Expression is positively regulated by the KK-1 cluster-specific transcription factor kk1F.</text>
</comment>
<comment type="disruption phenotype">
    <text evidence="6">Decreases significantly the production of KK-1.</text>
</comment>
<comment type="similarity">
    <text evidence="9">Belongs to the ABC transporter superfamily. ABCB family. Multidrug resistance exporter (TC 3.A.1.201) subfamily.</text>
</comment>
<dbReference type="EMBL" id="LC371755">
    <property type="protein sequence ID" value="BBC83962.1"/>
    <property type="molecule type" value="Genomic_DNA"/>
</dbReference>
<dbReference type="SMR" id="A0A348AXX9"/>
<dbReference type="VEuPathDB" id="FungiDB:yc1106_06626"/>
<dbReference type="GO" id="GO:0005743">
    <property type="term" value="C:mitochondrial inner membrane"/>
    <property type="evidence" value="ECO:0007669"/>
    <property type="project" value="TreeGrafter"/>
</dbReference>
<dbReference type="GO" id="GO:0005886">
    <property type="term" value="C:plasma membrane"/>
    <property type="evidence" value="ECO:0007669"/>
    <property type="project" value="UniProtKB-SubCell"/>
</dbReference>
<dbReference type="GO" id="GO:0015421">
    <property type="term" value="F:ABC-type oligopeptide transporter activity"/>
    <property type="evidence" value="ECO:0007669"/>
    <property type="project" value="TreeGrafter"/>
</dbReference>
<dbReference type="GO" id="GO:0005524">
    <property type="term" value="F:ATP binding"/>
    <property type="evidence" value="ECO:0007669"/>
    <property type="project" value="UniProtKB-KW"/>
</dbReference>
<dbReference type="GO" id="GO:0016887">
    <property type="term" value="F:ATP hydrolysis activity"/>
    <property type="evidence" value="ECO:0007669"/>
    <property type="project" value="InterPro"/>
</dbReference>
<dbReference type="GO" id="GO:0090374">
    <property type="term" value="P:oligopeptide export from mitochondrion"/>
    <property type="evidence" value="ECO:0007669"/>
    <property type="project" value="TreeGrafter"/>
</dbReference>
<dbReference type="CDD" id="cd18577">
    <property type="entry name" value="ABC_6TM_Pgp_ABCB1_D1_like"/>
    <property type="match status" value="1"/>
</dbReference>
<dbReference type="CDD" id="cd18578">
    <property type="entry name" value="ABC_6TM_Pgp_ABCB1_D2_like"/>
    <property type="match status" value="1"/>
</dbReference>
<dbReference type="CDD" id="cd03249">
    <property type="entry name" value="ABC_MTABC3_MDL1_MDL2"/>
    <property type="match status" value="1"/>
</dbReference>
<dbReference type="FunFam" id="1.20.1560.10:FF:000057">
    <property type="entry name" value="ABC multidrug transporter SitT"/>
    <property type="match status" value="1"/>
</dbReference>
<dbReference type="FunFam" id="3.40.50.300:FF:000913">
    <property type="entry name" value="ABC multidrug transporter SitT"/>
    <property type="match status" value="1"/>
</dbReference>
<dbReference type="Gene3D" id="1.20.1560.10">
    <property type="entry name" value="ABC transporter type 1, transmembrane domain"/>
    <property type="match status" value="1"/>
</dbReference>
<dbReference type="Gene3D" id="3.40.50.300">
    <property type="entry name" value="P-loop containing nucleotide triphosphate hydrolases"/>
    <property type="match status" value="2"/>
</dbReference>
<dbReference type="InterPro" id="IPR003593">
    <property type="entry name" value="AAA+_ATPase"/>
</dbReference>
<dbReference type="InterPro" id="IPR011527">
    <property type="entry name" value="ABC1_TM_dom"/>
</dbReference>
<dbReference type="InterPro" id="IPR036640">
    <property type="entry name" value="ABC1_TM_sf"/>
</dbReference>
<dbReference type="InterPro" id="IPR003439">
    <property type="entry name" value="ABC_transporter-like_ATP-bd"/>
</dbReference>
<dbReference type="InterPro" id="IPR017871">
    <property type="entry name" value="ABC_transporter-like_CS"/>
</dbReference>
<dbReference type="InterPro" id="IPR027417">
    <property type="entry name" value="P-loop_NTPase"/>
</dbReference>
<dbReference type="InterPro" id="IPR039421">
    <property type="entry name" value="Type_1_exporter"/>
</dbReference>
<dbReference type="PANTHER" id="PTHR43394:SF11">
    <property type="entry name" value="ATP-BINDING CASSETTE TRANSPORTER"/>
    <property type="match status" value="1"/>
</dbReference>
<dbReference type="PANTHER" id="PTHR43394">
    <property type="entry name" value="ATP-DEPENDENT PERMEASE MDL1, MITOCHONDRIAL"/>
    <property type="match status" value="1"/>
</dbReference>
<dbReference type="Pfam" id="PF00664">
    <property type="entry name" value="ABC_membrane"/>
    <property type="match status" value="2"/>
</dbReference>
<dbReference type="Pfam" id="PF00005">
    <property type="entry name" value="ABC_tran"/>
    <property type="match status" value="3"/>
</dbReference>
<dbReference type="SMART" id="SM00382">
    <property type="entry name" value="AAA"/>
    <property type="match status" value="2"/>
</dbReference>
<dbReference type="SUPFAM" id="SSF90123">
    <property type="entry name" value="ABC transporter transmembrane region"/>
    <property type="match status" value="2"/>
</dbReference>
<dbReference type="SUPFAM" id="SSF52540">
    <property type="entry name" value="P-loop containing nucleoside triphosphate hydrolases"/>
    <property type="match status" value="3"/>
</dbReference>
<dbReference type="PROSITE" id="PS50929">
    <property type="entry name" value="ABC_TM1F"/>
    <property type="match status" value="2"/>
</dbReference>
<dbReference type="PROSITE" id="PS00211">
    <property type="entry name" value="ABC_TRANSPORTER_1"/>
    <property type="match status" value="2"/>
</dbReference>
<dbReference type="PROSITE" id="PS50893">
    <property type="entry name" value="ABC_TRANSPORTER_2"/>
    <property type="match status" value="2"/>
</dbReference>
<accession>A0A348AXX9</accession>
<organism>
    <name type="scientific">Curvularia clavata</name>
    <dbReference type="NCBI Taxonomy" id="95742"/>
    <lineage>
        <taxon>Eukaryota</taxon>
        <taxon>Fungi</taxon>
        <taxon>Dikarya</taxon>
        <taxon>Ascomycota</taxon>
        <taxon>Pezizomycotina</taxon>
        <taxon>Dothideomycetes</taxon>
        <taxon>Pleosporomycetidae</taxon>
        <taxon>Pleosporales</taxon>
        <taxon>Pleosporineae</taxon>
        <taxon>Pleosporaceae</taxon>
        <taxon>Curvularia</taxon>
    </lineage>
</organism>
<sequence>MSAIELPPLRSRSEEAARAEHNAQTLAHENANIAGYDESPAVQQVETDAPETKGAPQASFKNYFRVFSYGTKLDYFLISLCCFTSIGAGTAMPLMNIVFGKLVGNFTDYFIPGSNVTRQEFEAEINKLALYIFYLFIGKFAMSYISMLAIRISGMRISAALRLAYLRALFAQPVSVIDTVSPGKVANRITTSSNIVQLAISQHFATLFQSLAFTVGLYVVALVKGWKLTLIASTGLPFILIVYGAMFPPFLRIHQITDKFQEEASAMAYEMFSSIRMIVAFGTESRLAKQHGVMLSKAASNEKRAAPLMGLTMSPAMVAMYGIFGITFWFGIKEYTKGRISSVGDITVVLFSVMMAVMNIGRVASPIISIAKAATAATELFVTIDASFHDTSGVMEPEVTGNAAITFINVAFSYPSRPGVPILKGLDLTITAGKVTAIVGPSGSGKSTIVGLIQRWYDLLGTTATAKKIDETEIPSSSTMASSPIEAVYDNTDKKSKKGKAGEEEEPEQDLGPNTCTGSLSVGRTNLRNVDVRWWRSQIGMVQQEPFLFNDTIYNNIVFGLCGTRYEGLSKDEKKIMVDEACREACAEEFISRLPQGLDTLVGESGIKLSGGQRQRIAIARSIIKRPPILILDEATSAIDVRTERIVQEALDRVSKNRTTIVIAHRLSTIKRADSIVVLRQGQLVEQGTHEELLKNGDGVYYGLVHAQELEMDAEDDDDHSSSLENIKMNDTKEDTASSGFEGHASREDSTYQNVGLLHSLGRLVVEQRHHWILYSVCCIGILGAGAVYPLQAYIFARIINVFTLTGPELVKQGNFWAGMFGVLAGGVGLSYYLLGAASHLISVELTRKYRSEYLSNMIRKPILFFDDKVHSPGSLTSRLSSDSQQVQQLLSMEMSMALIACTNLLGCTIIAFVYGWKLSLVGLFAALPLILGAGLVRTRLEIQLEAENAKVFENSSQFATEAVAGFRTVLSLLMEPMIRSRYDKLLKGHVVEALAKAKYGTIIFAASDSLELACMSLTFWYGGKLLASREYDLIQFFIVYTAIIQGATAAGIWFSFTPSMAQATGAANRILSMRPTSTDPSSYSPLPCSDEGVGIEFQHVSFKYQSRDVPVLSNLNLQILPGQVAALVGSSGCGKSTTLSLLERFYDASSGHILYNGQDITTFSPAEYRKQMSLVSQEPTLYQGSIRENISLSVESASDDDIKQACRDAQIHDFITSLPEGYETRLGPKGMSLSGGQRQRISLARALLRKPKILLLDEATSSLDSESEKYVQEAIERAASEGDRTVIIVAHRLATIQKADVIFVLGSGKVLEKGDHQALLRKKGVYWQMCQAQALNR</sequence>
<feature type="chain" id="PRO_0000450433" description="ABC-type transporter kk1G">
    <location>
        <begin position="1"/>
        <end position="1338"/>
    </location>
</feature>
<feature type="transmembrane region" description="Helical" evidence="1 3">
    <location>
        <begin position="75"/>
        <end position="95"/>
    </location>
</feature>
<feature type="transmembrane region" description="Helical" evidence="1 3">
    <location>
        <begin position="130"/>
        <end position="150"/>
    </location>
</feature>
<feature type="transmembrane region" description="Helical" evidence="1 3">
    <location>
        <begin position="203"/>
        <end position="223"/>
    </location>
</feature>
<feature type="transmembrane region" description="Helical" evidence="1 3">
    <location>
        <begin position="230"/>
        <end position="250"/>
    </location>
</feature>
<feature type="transmembrane region" description="Helical" evidence="1 3">
    <location>
        <begin position="312"/>
        <end position="332"/>
    </location>
</feature>
<feature type="transmembrane region" description="Helical" evidence="1 3">
    <location>
        <begin position="340"/>
        <end position="360"/>
    </location>
</feature>
<feature type="transmembrane region" description="Helical" evidence="1 3">
    <location>
        <begin position="777"/>
        <end position="797"/>
    </location>
</feature>
<feature type="transmembrane region" description="Helical" evidence="1 3">
    <location>
        <begin position="816"/>
        <end position="836"/>
    </location>
</feature>
<feature type="transmembrane region" description="Helical" evidence="1 3">
    <location>
        <begin position="895"/>
        <end position="917"/>
    </location>
</feature>
<feature type="transmembrane region" description="Helical" evidence="1 3">
    <location>
        <begin position="919"/>
        <end position="941"/>
    </location>
</feature>
<feature type="transmembrane region" description="Helical" evidence="1 3">
    <location>
        <begin position="1003"/>
        <end position="1023"/>
    </location>
</feature>
<feature type="transmembrane region" description="Helical" evidence="1 3">
    <location>
        <begin position="1037"/>
        <end position="1057"/>
    </location>
</feature>
<feature type="domain" description="ABC transmembrane type-1 1" evidence="3">
    <location>
        <begin position="80"/>
        <end position="372"/>
    </location>
</feature>
<feature type="domain" description="ABC transporter 1" evidence="2">
    <location>
        <begin position="405"/>
        <end position="706"/>
    </location>
</feature>
<feature type="domain" description="ABC transmembrane type-1 2" evidence="3">
    <location>
        <begin position="777"/>
        <end position="1063"/>
    </location>
</feature>
<feature type="domain" description="ABC transporter 2" evidence="2">
    <location>
        <begin position="1096"/>
        <end position="1333"/>
    </location>
</feature>
<feature type="region of interest" description="Disordered" evidence="4">
    <location>
        <begin position="1"/>
        <end position="21"/>
    </location>
</feature>
<feature type="region of interest" description="Disordered" evidence="4">
    <location>
        <begin position="473"/>
        <end position="518"/>
    </location>
</feature>
<feature type="region of interest" description="Disordered" evidence="4">
    <location>
        <begin position="715"/>
        <end position="747"/>
    </location>
</feature>
<feature type="compositionally biased region" description="Basic and acidic residues" evidence="4">
    <location>
        <begin position="11"/>
        <end position="21"/>
    </location>
</feature>
<feature type="binding site" evidence="2">
    <location>
        <begin position="440"/>
        <end position="447"/>
    </location>
    <ligand>
        <name>ATP</name>
        <dbReference type="ChEBI" id="CHEBI:30616"/>
    </ligand>
</feature>
<feature type="binding site" evidence="2">
    <location>
        <begin position="1130"/>
        <end position="1137"/>
    </location>
    <ligand>
        <name>ATP</name>
        <dbReference type="ChEBI" id="CHEBI:30616"/>
    </ligand>
</feature>
<evidence type="ECO:0000255" key="1"/>
<evidence type="ECO:0000255" key="2">
    <source>
        <dbReference type="PROSITE-ProRule" id="PRU00434"/>
    </source>
</evidence>
<evidence type="ECO:0000255" key="3">
    <source>
        <dbReference type="PROSITE-ProRule" id="PRU00441"/>
    </source>
</evidence>
<evidence type="ECO:0000256" key="4">
    <source>
        <dbReference type="SAM" id="MobiDB-lite"/>
    </source>
</evidence>
<evidence type="ECO:0000269" key="5">
    <source>
    </source>
</evidence>
<evidence type="ECO:0000269" key="6">
    <source>
    </source>
</evidence>
<evidence type="ECO:0000303" key="7">
    <source>
    </source>
</evidence>
<evidence type="ECO:0000303" key="8">
    <source>
    </source>
</evidence>
<evidence type="ECO:0000305" key="9"/>
<evidence type="ECO:0000305" key="10">
    <source>
    </source>
</evidence>
<evidence type="ECO:0000305" key="11">
    <source>
    </source>
</evidence>
<proteinExistence type="evidence at transcript level"/>
<reference key="1">
    <citation type="journal article" date="2018" name="Front. Microbiol.">
        <title>Heterologous production of a novel cyclic peptide compound, KK-1, in Aspergillus oryzae.</title>
        <authorList>
            <person name="Yoshimi A."/>
            <person name="Yamaguchi S."/>
            <person name="Fujioka T."/>
            <person name="Kawai K."/>
            <person name="Gomi K."/>
            <person name="Machida M."/>
            <person name="Abe K."/>
        </authorList>
    </citation>
    <scope>NUCLEOTIDE SEQUENCE [GENOMIC DNA]</scope>
    <scope>FUNCTION</scope>
    <scope>PATHWAY</scope>
    <source>
        <strain>BAUA-2787</strain>
    </source>
</reference>
<reference key="2">
    <citation type="journal article" date="2022" name="Front. Fungal Biol.">
        <title>Discovery of a gene cluster for the biosynthesis of novel cyclic peptide compound, KK-1, in Curvularia clavata.</title>
        <authorList>
            <person name="Yamaguchi S."/>
            <person name="Fujioka T."/>
            <person name="Yoshimi A."/>
            <person name="Kumagai T."/>
            <person name="Umemura M."/>
            <person name="Abe K."/>
            <person name="Machida M."/>
            <person name="Kawai K."/>
        </authorList>
    </citation>
    <scope>FUNCTION</scope>
    <scope>INDUCTION</scope>
    <scope>DISRUPTION PHENOTYPE</scope>
    <scope>PATHWAY</scope>
</reference>
<gene>
    <name evidence="8" type="primary">kk1G</name>
    <name evidence="7" type="synonym">TR06</name>
    <name type="ORF">TRAF135006</name>
</gene>
<name>KK1G_CURCL</name>
<protein>
    <recommendedName>
        <fullName evidence="8">ABC-type transporter kk1G</fullName>
    </recommendedName>
    <alternativeName>
        <fullName evidence="8">KK-1 biosynthesis cluster protein G</fullName>
    </alternativeName>
</protein>